<keyword id="KW-0687">Ribonucleoprotein</keyword>
<keyword id="KW-0689">Ribosomal protein</keyword>
<keyword id="KW-0694">RNA-binding</keyword>
<keyword id="KW-0699">rRNA-binding</keyword>
<name>RS8_ANAD2</name>
<organism>
    <name type="scientific">Anaeromyxobacter dehalogenans (strain 2CP-1 / ATCC BAA-258)</name>
    <dbReference type="NCBI Taxonomy" id="455488"/>
    <lineage>
        <taxon>Bacteria</taxon>
        <taxon>Pseudomonadati</taxon>
        <taxon>Myxococcota</taxon>
        <taxon>Myxococcia</taxon>
        <taxon>Myxococcales</taxon>
        <taxon>Cystobacterineae</taxon>
        <taxon>Anaeromyxobacteraceae</taxon>
        <taxon>Anaeromyxobacter</taxon>
    </lineage>
</organism>
<gene>
    <name evidence="1" type="primary">rpsH</name>
    <name type="ordered locus">A2cp1_2032</name>
</gene>
<accession>B8J874</accession>
<evidence type="ECO:0000255" key="1">
    <source>
        <dbReference type="HAMAP-Rule" id="MF_01302"/>
    </source>
</evidence>
<evidence type="ECO:0000305" key="2"/>
<feature type="chain" id="PRO_1000165300" description="Small ribosomal subunit protein uS8">
    <location>
        <begin position="1"/>
        <end position="132"/>
    </location>
</feature>
<proteinExistence type="inferred from homology"/>
<protein>
    <recommendedName>
        <fullName evidence="1">Small ribosomal subunit protein uS8</fullName>
    </recommendedName>
    <alternativeName>
        <fullName evidence="2">30S ribosomal protein S8</fullName>
    </alternativeName>
</protein>
<comment type="function">
    <text evidence="1">One of the primary rRNA binding proteins, it binds directly to 16S rRNA central domain where it helps coordinate assembly of the platform of the 30S subunit.</text>
</comment>
<comment type="subunit">
    <text evidence="1">Part of the 30S ribosomal subunit. Contacts proteins S5 and S12.</text>
</comment>
<comment type="similarity">
    <text evidence="1">Belongs to the universal ribosomal protein uS8 family.</text>
</comment>
<dbReference type="EMBL" id="CP001359">
    <property type="protein sequence ID" value="ACL65373.1"/>
    <property type="molecule type" value="Genomic_DNA"/>
</dbReference>
<dbReference type="RefSeq" id="WP_012525981.1">
    <property type="nucleotide sequence ID" value="NC_011891.1"/>
</dbReference>
<dbReference type="SMR" id="B8J874"/>
<dbReference type="KEGG" id="acp:A2cp1_2032"/>
<dbReference type="HOGENOM" id="CLU_098428_0_2_7"/>
<dbReference type="Proteomes" id="UP000007089">
    <property type="component" value="Chromosome"/>
</dbReference>
<dbReference type="GO" id="GO:1990904">
    <property type="term" value="C:ribonucleoprotein complex"/>
    <property type="evidence" value="ECO:0007669"/>
    <property type="project" value="UniProtKB-KW"/>
</dbReference>
<dbReference type="GO" id="GO:0005840">
    <property type="term" value="C:ribosome"/>
    <property type="evidence" value="ECO:0007669"/>
    <property type="project" value="UniProtKB-KW"/>
</dbReference>
<dbReference type="GO" id="GO:0019843">
    <property type="term" value="F:rRNA binding"/>
    <property type="evidence" value="ECO:0007669"/>
    <property type="project" value="UniProtKB-UniRule"/>
</dbReference>
<dbReference type="GO" id="GO:0003735">
    <property type="term" value="F:structural constituent of ribosome"/>
    <property type="evidence" value="ECO:0007669"/>
    <property type="project" value="InterPro"/>
</dbReference>
<dbReference type="GO" id="GO:0006412">
    <property type="term" value="P:translation"/>
    <property type="evidence" value="ECO:0007669"/>
    <property type="project" value="UniProtKB-UniRule"/>
</dbReference>
<dbReference type="FunFam" id="3.30.1370.30:FF:000002">
    <property type="entry name" value="30S ribosomal protein S8"/>
    <property type="match status" value="1"/>
</dbReference>
<dbReference type="FunFam" id="3.30.1490.10:FF:000001">
    <property type="entry name" value="30S ribosomal protein S8"/>
    <property type="match status" value="1"/>
</dbReference>
<dbReference type="Gene3D" id="3.30.1370.30">
    <property type="match status" value="1"/>
</dbReference>
<dbReference type="Gene3D" id="3.30.1490.10">
    <property type="match status" value="1"/>
</dbReference>
<dbReference type="HAMAP" id="MF_01302_B">
    <property type="entry name" value="Ribosomal_uS8_B"/>
    <property type="match status" value="1"/>
</dbReference>
<dbReference type="InterPro" id="IPR000630">
    <property type="entry name" value="Ribosomal_uS8"/>
</dbReference>
<dbReference type="InterPro" id="IPR047863">
    <property type="entry name" value="Ribosomal_uS8_CS"/>
</dbReference>
<dbReference type="InterPro" id="IPR035987">
    <property type="entry name" value="Ribosomal_uS8_sf"/>
</dbReference>
<dbReference type="NCBIfam" id="NF001109">
    <property type="entry name" value="PRK00136.1"/>
    <property type="match status" value="1"/>
</dbReference>
<dbReference type="PANTHER" id="PTHR11758">
    <property type="entry name" value="40S RIBOSOMAL PROTEIN S15A"/>
    <property type="match status" value="1"/>
</dbReference>
<dbReference type="Pfam" id="PF00410">
    <property type="entry name" value="Ribosomal_S8"/>
    <property type="match status" value="1"/>
</dbReference>
<dbReference type="SUPFAM" id="SSF56047">
    <property type="entry name" value="Ribosomal protein S8"/>
    <property type="match status" value="1"/>
</dbReference>
<dbReference type="PROSITE" id="PS00053">
    <property type="entry name" value="RIBOSOMAL_S8"/>
    <property type="match status" value="1"/>
</dbReference>
<sequence length="132" mass="14604">MSFTDPIGDMLTRIRNASSARHEKVLVPASRLKVRIAEVLREEGFIKDFVLHEDGVQGAITIVLKYSADREPAISDIKRVSKPGLRRYVATDSIPRVLNGMGVAILSTSKGVMVDREARKQKVGGELICTVW</sequence>
<reference key="1">
    <citation type="submission" date="2009-01" db="EMBL/GenBank/DDBJ databases">
        <title>Complete sequence of Anaeromyxobacter dehalogenans 2CP-1.</title>
        <authorList>
            <person name="Lucas S."/>
            <person name="Copeland A."/>
            <person name="Lapidus A."/>
            <person name="Glavina del Rio T."/>
            <person name="Dalin E."/>
            <person name="Tice H."/>
            <person name="Bruce D."/>
            <person name="Goodwin L."/>
            <person name="Pitluck S."/>
            <person name="Saunders E."/>
            <person name="Brettin T."/>
            <person name="Detter J.C."/>
            <person name="Han C."/>
            <person name="Larimer F."/>
            <person name="Land M."/>
            <person name="Hauser L."/>
            <person name="Kyrpides N."/>
            <person name="Ovchinnikova G."/>
            <person name="Beliaev A.S."/>
            <person name="Richardson P."/>
        </authorList>
    </citation>
    <scope>NUCLEOTIDE SEQUENCE [LARGE SCALE GENOMIC DNA]</scope>
    <source>
        <strain>2CP-1 / ATCC BAA-258</strain>
    </source>
</reference>